<accession>P81424</accession>
<proteinExistence type="evidence at protein level"/>
<sequence>MFFKIDLKNHPYLIRLKKQEE</sequence>
<feature type="chain" id="PRO_0000087166" description="71 kDa F-actin-binding protein">
    <location>
        <begin position="1"/>
        <end position="21" status="greater than"/>
    </location>
</feature>
<feature type="non-terminal residue">
    <location>
        <position position="21"/>
    </location>
</feature>
<reference key="1">
    <citation type="journal article" date="1998" name="J. Biochem.">
        <title>A new Tetrahymena actin-binding protein is localized in the division furrow.</title>
        <authorList>
            <person name="Watanabe A."/>
            <person name="Kurasawa Y."/>
            <person name="Watanabe Y."/>
            <person name="Numata O."/>
        </authorList>
    </citation>
    <scope>PROTEIN SEQUENCE</scope>
</reference>
<dbReference type="PIR" id="PD0015">
    <property type="entry name" value="PD0015"/>
</dbReference>
<dbReference type="GO" id="GO:0003779">
    <property type="term" value="F:actin binding"/>
    <property type="evidence" value="ECO:0007669"/>
    <property type="project" value="UniProtKB-KW"/>
</dbReference>
<comment type="function">
    <text>Binds directly to F-actin and induces actin filament bundling. May function as a regulator of actin filament organization.</text>
</comment>
<comment type="developmental stage">
    <text>Colocalized with actin in the oral apparatus in interphase cells. In dividing cells colocalized with actin in the division furrow.</text>
</comment>
<comment type="PTM">
    <text>The N-terminus is blocked.</text>
</comment>
<comment type="miscellaneous">
    <text>On the 2D-gel the determined pI of this protein is: 7.5, its MW is: 71 kDa.</text>
</comment>
<comment type="similarity">
    <text evidence="1">To yeast fimbrin.</text>
</comment>
<name>FA71_TETPY</name>
<protein>
    <recommendedName>
        <fullName>71 kDa F-actin-binding protein</fullName>
    </recommendedName>
</protein>
<organism>
    <name type="scientific">Tetrahymena pyriformis</name>
    <dbReference type="NCBI Taxonomy" id="5908"/>
    <lineage>
        <taxon>Eukaryota</taxon>
        <taxon>Sar</taxon>
        <taxon>Alveolata</taxon>
        <taxon>Ciliophora</taxon>
        <taxon>Intramacronucleata</taxon>
        <taxon>Oligohymenophorea</taxon>
        <taxon>Hymenostomatida</taxon>
        <taxon>Tetrahymenina</taxon>
        <taxon>Tetrahymenidae</taxon>
        <taxon>Tetrahymena</taxon>
    </lineage>
</organism>
<evidence type="ECO:0000305" key="1"/>
<keyword id="KW-0009">Actin-binding</keyword>
<keyword id="KW-0903">Direct protein sequencing</keyword>